<proteinExistence type="evidence at protein level"/>
<dbReference type="EC" id="3.6.5.-" evidence="14"/>
<dbReference type="EMBL" id="L38444">
    <property type="protein sequence ID" value="AAA64914.1"/>
    <property type="molecule type" value="mRNA"/>
</dbReference>
<dbReference type="EMBL" id="AK088858">
    <property type="protein sequence ID" value="BAC40617.1"/>
    <property type="molecule type" value="mRNA"/>
</dbReference>
<dbReference type="EMBL" id="AK172580">
    <property type="protein sequence ID" value="BAE43078.1"/>
    <property type="molecule type" value="mRNA"/>
</dbReference>
<dbReference type="EMBL" id="FR734026">
    <property type="protein sequence ID" value="CBY65989.1"/>
    <property type="molecule type" value="Genomic_DNA"/>
</dbReference>
<dbReference type="EMBL" id="AL645688">
    <property type="status" value="NOT_ANNOTATED_CDS"/>
    <property type="molecule type" value="Genomic_DNA"/>
</dbReference>
<dbReference type="CCDS" id="CCDS48781.1"/>
<dbReference type="PIR" id="I56251">
    <property type="entry name" value="I56251"/>
</dbReference>
<dbReference type="RefSeq" id="NP_001138636.1">
    <property type="nucleotide sequence ID" value="NM_001145164.1"/>
</dbReference>
<dbReference type="RefSeq" id="NP_035709.3">
    <property type="nucleotide sequence ID" value="NM_011579.3"/>
</dbReference>
<dbReference type="PDB" id="7VES">
    <property type="method" value="X-ray"/>
    <property type="resolution" value="2.00 A"/>
    <property type="chains" value="A=1-415"/>
</dbReference>
<dbReference type="PDB" id="7VEX">
    <property type="method" value="X-ray"/>
    <property type="resolution" value="1.51 A"/>
    <property type="chains" value="A=1-415"/>
</dbReference>
<dbReference type="PDB" id="8H4M">
    <property type="method" value="X-ray"/>
    <property type="resolution" value="1.68 A"/>
    <property type="chains" value="A=1-415"/>
</dbReference>
<dbReference type="PDB" id="8H4O">
    <property type="method" value="X-ray"/>
    <property type="resolution" value="2.05 A"/>
    <property type="chains" value="A/B=1-415"/>
</dbReference>
<dbReference type="PDBsum" id="7VES"/>
<dbReference type="PDBsum" id="7VEX"/>
<dbReference type="PDBsum" id="8H4M"/>
<dbReference type="PDBsum" id="8H4O"/>
<dbReference type="SMR" id="Q3T9E4"/>
<dbReference type="FunCoup" id="Q3T9E4">
    <property type="interactions" value="41"/>
</dbReference>
<dbReference type="GlyGen" id="Q3T9E4">
    <property type="glycosylation" value="1 site"/>
</dbReference>
<dbReference type="PeptideAtlas" id="Q3T9E4"/>
<dbReference type="Pumba" id="Q3T9E4"/>
<dbReference type="DNASU" id="21822"/>
<dbReference type="Ensembl" id="ENSMUST00000046745.7">
    <property type="protein sequence ID" value="ENSMUSP00000045025.7"/>
    <property type="gene ID" value="ENSMUSG00000078921.4"/>
</dbReference>
<dbReference type="Ensembl" id="ENSMUST00000068063.4">
    <property type="protein sequence ID" value="ENSMUSP00000069914.4"/>
    <property type="gene ID" value="ENSMUSG00000078922.10"/>
</dbReference>
<dbReference type="GeneID" id="100039796"/>
<dbReference type="GeneID" id="21822"/>
<dbReference type="KEGG" id="mmu:100039796"/>
<dbReference type="KEGG" id="mmu:21822"/>
<dbReference type="AGR" id="MGI:3710083"/>
<dbReference type="CTD" id="100039796"/>
<dbReference type="CTD" id="21822"/>
<dbReference type="MGI" id="MGI:3710083">
    <property type="gene designation" value="Tgtp2"/>
</dbReference>
<dbReference type="VEuPathDB" id="HostDB:ENSMUSG00000078921"/>
<dbReference type="VEuPathDB" id="HostDB:ENSMUSG00000078922"/>
<dbReference type="InParanoid" id="Q3T9E4"/>
<dbReference type="OMA" id="LMANLKC"/>
<dbReference type="OrthoDB" id="422720at2759"/>
<dbReference type="PhylomeDB" id="Q3T9E4"/>
<dbReference type="BioGRID-ORCS" id="100039796">
    <property type="hits" value="1 hit in 42 CRISPR screens"/>
</dbReference>
<dbReference type="BioGRID-ORCS" id="21822">
    <property type="hits" value="4 hits in 44 CRISPR screens"/>
</dbReference>
<dbReference type="ChiTaRS" id="Tgtp1">
    <property type="organism name" value="mouse"/>
</dbReference>
<dbReference type="PRO" id="PR:Q3T9E4"/>
<dbReference type="Proteomes" id="UP000000589">
    <property type="component" value="Chromosome 11"/>
</dbReference>
<dbReference type="RNAct" id="Q3T9E4">
    <property type="molecule type" value="protein"/>
</dbReference>
<dbReference type="Bgee" id="ENSMUSG00000078921">
    <property type="expression patterns" value="Expressed in thymus and 71 other cell types or tissues"/>
</dbReference>
<dbReference type="ExpressionAtlas" id="Q3T9E4">
    <property type="expression patterns" value="baseline and differential"/>
</dbReference>
<dbReference type="GO" id="GO:0005783">
    <property type="term" value="C:endoplasmic reticulum"/>
    <property type="evidence" value="ECO:0007669"/>
    <property type="project" value="UniProtKB-SubCell"/>
</dbReference>
<dbReference type="GO" id="GO:0005794">
    <property type="term" value="C:Golgi apparatus"/>
    <property type="evidence" value="ECO:0007669"/>
    <property type="project" value="UniProtKB-SubCell"/>
</dbReference>
<dbReference type="GO" id="GO:0016020">
    <property type="term" value="C:membrane"/>
    <property type="evidence" value="ECO:0007669"/>
    <property type="project" value="InterPro"/>
</dbReference>
<dbReference type="GO" id="GO:0005525">
    <property type="term" value="F:GTP binding"/>
    <property type="evidence" value="ECO:0007669"/>
    <property type="project" value="UniProtKB-KW"/>
</dbReference>
<dbReference type="GO" id="GO:0003924">
    <property type="term" value="F:GTPase activity"/>
    <property type="evidence" value="ECO:0007669"/>
    <property type="project" value="RHEA"/>
</dbReference>
<dbReference type="GO" id="GO:0042832">
    <property type="term" value="P:defense response to protozoan"/>
    <property type="evidence" value="ECO:0000314"/>
    <property type="project" value="UniProtKB"/>
</dbReference>
<dbReference type="GO" id="GO:0045087">
    <property type="term" value="P:innate immune response"/>
    <property type="evidence" value="ECO:0007669"/>
    <property type="project" value="UniProtKB-KW"/>
</dbReference>
<dbReference type="CDD" id="cd04104">
    <property type="entry name" value="p47_IIGP_like"/>
    <property type="match status" value="1"/>
</dbReference>
<dbReference type="FunFam" id="3.40.50.300:FF:000541">
    <property type="entry name" value="Immunity related GTPase M"/>
    <property type="match status" value="1"/>
</dbReference>
<dbReference type="Gene3D" id="3.40.50.300">
    <property type="entry name" value="P-loop containing nucleotide triphosphate hydrolases"/>
    <property type="match status" value="1"/>
</dbReference>
<dbReference type="InterPro" id="IPR030385">
    <property type="entry name" value="G_IRG_dom"/>
</dbReference>
<dbReference type="InterPro" id="IPR007743">
    <property type="entry name" value="Immunity-related_GTPase-like"/>
</dbReference>
<dbReference type="InterPro" id="IPR051515">
    <property type="entry name" value="IRG"/>
</dbReference>
<dbReference type="InterPro" id="IPR027417">
    <property type="entry name" value="P-loop_NTPase"/>
</dbReference>
<dbReference type="PANTHER" id="PTHR32341:SF15">
    <property type="entry name" value="INTERFERON-GAMMA-INDUCIBLE GTPASE 10-RELATED"/>
    <property type="match status" value="1"/>
</dbReference>
<dbReference type="PANTHER" id="PTHR32341">
    <property type="entry name" value="INTERFERON-INDUCIBLE GTPASE"/>
    <property type="match status" value="1"/>
</dbReference>
<dbReference type="Pfam" id="PF05049">
    <property type="entry name" value="IIGP"/>
    <property type="match status" value="1"/>
</dbReference>
<dbReference type="SUPFAM" id="SSF52540">
    <property type="entry name" value="P-loop containing nucleoside triphosphate hydrolases"/>
    <property type="match status" value="1"/>
</dbReference>
<dbReference type="PROSITE" id="PS51716">
    <property type="entry name" value="G_IRG"/>
    <property type="match status" value="1"/>
</dbReference>
<accession>Q3T9E4</accession>
<comment type="function">
    <text evidence="3 5 6 8 9 10 14">Involved in innate cell-autonomous resistance to intracellular pathogens, such as Toxoplasma gondii (PubMed:19265156, PubMed:20109161, PubMed:24563254, PubMed:21147463). During avirulent type II T.gondii infection, recruited to the parasitophorous vacuole (PV) membrane, leading to PV vesiculation and rupture, and subsequent digestion of the parasite within the cytosol (PubMed:19265156, PubMed:24563254, PubMed:24324375, PubMed:22802726, PubMed:21147463). Not recruited to virulent type I T.gondii PV membrane (PubMed:19265156). May confer an antiviral state for vesicular stomatitis virus (PubMed:9725230).</text>
</comment>
<comment type="catalytic activity">
    <reaction evidence="14">
        <text>GTP + H2O = GDP + phosphate + H(+)</text>
        <dbReference type="Rhea" id="RHEA:19669"/>
        <dbReference type="ChEBI" id="CHEBI:15377"/>
        <dbReference type="ChEBI" id="CHEBI:15378"/>
        <dbReference type="ChEBI" id="CHEBI:37565"/>
        <dbReference type="ChEBI" id="CHEBI:43474"/>
        <dbReference type="ChEBI" id="CHEBI:58189"/>
    </reaction>
</comment>
<comment type="subunit">
    <text evidence="11">Monomer, homodimer or homotetramer in the presence of GTP (PubMed:24832449). Forms higher order homooligomers in GTP-dependent manner (PubMed:24832449).</text>
</comment>
<comment type="subunit">
    <text evidence="6">(Microbial infection) Interacts with Toxoplasma gondii ROP18.</text>
</comment>
<comment type="subcellular location">
    <subcellularLocation>
        <location evidence="4">Cytoplasm</location>
    </subcellularLocation>
    <subcellularLocation>
        <location evidence="4">Endoplasmic reticulum</location>
    </subcellularLocation>
    <subcellularLocation>
        <location evidence="4">Golgi apparatus</location>
    </subcellularLocation>
    <text evidence="4 20">In astrocytes stimulated with IFNG or TNF, diffuse cytoplasmic localization decreases and the protein partially relocalizes to the endoplasmic reticulum and Golgi apparatus (PubMed:19285957). Due to sequence similarity with Tgtp1, it is impossible to assign unambiguously experimental data published in the literature to Tgtp1 or Tgtp2 gene (Probable).</text>
</comment>
<comment type="subcellular location">
    <subcellularLocation>
        <location>Parasitophorous vacuole membrane</location>
        <topology evidence="6 7 9">Peripheral membrane protein</topology>
    </subcellularLocation>
    <text>(Microbial infection).</text>
</comment>
<comment type="tissue specificity">
    <text evidence="4 12 13">Expressed in thymus and lymph nodes, predominantly T-cells. Not expressed by immature CD4(+) CD8(+) thymocytes (at protein level) (PubMed:7836757). Expressed in IFNG-stimulated macrophages (PubMed:7884320). Expressed at low levels in unstimulated astrocytes (PubMed:19285957). Due to sequence similarity with Tgtp1, it is impossible to assign unambiguously experimental data published in the literature to Tgtp1 or Tgtp2 gene.</text>
</comment>
<comment type="induction">
    <text evidence="4 10 12 13 14 20">In macrophages, up-regulated by IFNG, but not by IL2, IL4, IL10, nor TNF (PubMed:7884320). Up-regulated by IFNG in lymph node cells and thymocytes and other cell types (PubMed:24563254, PubMed:7836757, PubMed:9725230). In astrocytes, up-regulated by TNF and IFNG; when both cytokines are combined, the effect is synergistic (PubMed:19285957). Due to sequence similarity with Tgtp1, it is impossible to assign unambiguously experimental data published in the literature to Tgtp1 or Tgtp2 gene (Probable).</text>
</comment>
<comment type="PTM">
    <text evidence="6 11">(Microbial infection) Phosphorylated by Toxoplasma gondii ROP17; the phosphorylation leads to disassembly of IRGB6 (TGTP1/TGTP2) polymers into monomers and dimers (PubMed:24832449). Phosphorylated by Toxoplasma gondii ROP18 (PubMed:21147463).</text>
</comment>
<comment type="similarity">
    <text evidence="2 18">Belongs to the TRAFAC class dynamin-like GTPase superfamily. IRG family.</text>
</comment>
<comment type="caution">
    <text evidence="19 20">The gene Tgtp1 belongs to a large family of eutherian IFNG-inducible GTPases, called immunity-related p47 GTPases, which comprises a variable amount of paralogs depending upon the species studied. In C57BL/6J mice, there are over 20 genes, whereas humans have only one ortholog. Tgtp2 closest paralog is Tgtp1. Both genes encode identical proteins. At the nucleotide sequence level, their CDSs differ at only 4 positions. Consequently it is almost impossible to assign unambiguously to one gene or the other experimental data published in the literature.</text>
</comment>
<organism>
    <name type="scientific">Mus musculus</name>
    <name type="common">Mouse</name>
    <dbReference type="NCBI Taxonomy" id="10090"/>
    <lineage>
        <taxon>Eukaryota</taxon>
        <taxon>Metazoa</taxon>
        <taxon>Chordata</taxon>
        <taxon>Craniata</taxon>
        <taxon>Vertebrata</taxon>
        <taxon>Euteleostomi</taxon>
        <taxon>Mammalia</taxon>
        <taxon>Eutheria</taxon>
        <taxon>Euarchontoglires</taxon>
        <taxon>Glires</taxon>
        <taxon>Rodentia</taxon>
        <taxon>Myomorpha</taxon>
        <taxon>Muroidea</taxon>
        <taxon>Muridae</taxon>
        <taxon>Murinae</taxon>
        <taxon>Mus</taxon>
        <taxon>Mus</taxon>
    </lineage>
</organism>
<keyword id="KW-0002">3D-structure</keyword>
<keyword id="KW-0963">Cytoplasm</keyword>
<keyword id="KW-0256">Endoplasmic reticulum</keyword>
<keyword id="KW-0333">Golgi apparatus</keyword>
<keyword id="KW-0342">GTP-binding</keyword>
<keyword id="KW-0378">Hydrolase</keyword>
<keyword id="KW-0391">Immunity</keyword>
<keyword id="KW-0399">Innate immunity</keyword>
<keyword id="KW-0472">Membrane</keyword>
<keyword id="KW-0547">Nucleotide-binding</keyword>
<keyword id="KW-0597">Phosphoprotein</keyword>
<keyword id="KW-1185">Reference proteome</keyword>
<protein>
    <recommendedName>
        <fullName>T-cell-specific guanine nucleotide triphosphate-binding protein 2</fullName>
        <ecNumber evidence="14">3.6.5.-</ecNumber>
    </recommendedName>
    <alternativeName>
        <fullName evidence="15">Interferon-gamma-inducible GTPase Ifggb6 protein</fullName>
    </alternativeName>
    <alternativeName>
        <fullName evidence="16">T-cell-specific guanine nucleotide triphosphate-binding protein</fullName>
    </alternativeName>
</protein>
<name>TGTP2_MOUSE</name>
<reference key="1">
    <citation type="journal article" date="1995" name="J. Immunol.">
        <title>Isolation of a gene encoding a developmentally regulated T cell-specific protein with a guanine nucleotide triphosphate-binding motif.</title>
        <authorList>
            <person name="Carlow D.A."/>
            <person name="Marth J."/>
            <person name="Clark-Lewis I."/>
            <person name="Teh H.S."/>
        </authorList>
    </citation>
    <scope>NUCLEOTIDE SEQUENCE [MRNA]</scope>
    <scope>INDUCTION BY TCR STIMULATION</scope>
    <scope>TISSUE SPECIFICITY</scope>
    <source>
        <tissue>Thymocyte</tissue>
    </source>
</reference>
<reference key="2">
    <citation type="journal article" date="2005" name="Science">
        <title>The transcriptional landscape of the mammalian genome.</title>
        <authorList>
            <person name="Carninci P."/>
            <person name="Kasukawa T."/>
            <person name="Katayama S."/>
            <person name="Gough J."/>
            <person name="Frith M.C."/>
            <person name="Maeda N."/>
            <person name="Oyama R."/>
            <person name="Ravasi T."/>
            <person name="Lenhard B."/>
            <person name="Wells C."/>
            <person name="Kodzius R."/>
            <person name="Shimokawa K."/>
            <person name="Bajic V.B."/>
            <person name="Brenner S.E."/>
            <person name="Batalov S."/>
            <person name="Forrest A.R."/>
            <person name="Zavolan M."/>
            <person name="Davis M.J."/>
            <person name="Wilming L.G."/>
            <person name="Aidinis V."/>
            <person name="Allen J.E."/>
            <person name="Ambesi-Impiombato A."/>
            <person name="Apweiler R."/>
            <person name="Aturaliya R.N."/>
            <person name="Bailey T.L."/>
            <person name="Bansal M."/>
            <person name="Baxter L."/>
            <person name="Beisel K.W."/>
            <person name="Bersano T."/>
            <person name="Bono H."/>
            <person name="Chalk A.M."/>
            <person name="Chiu K.P."/>
            <person name="Choudhary V."/>
            <person name="Christoffels A."/>
            <person name="Clutterbuck D.R."/>
            <person name="Crowe M.L."/>
            <person name="Dalla E."/>
            <person name="Dalrymple B.P."/>
            <person name="de Bono B."/>
            <person name="Della Gatta G."/>
            <person name="di Bernardo D."/>
            <person name="Down T."/>
            <person name="Engstrom P."/>
            <person name="Fagiolini M."/>
            <person name="Faulkner G."/>
            <person name="Fletcher C.F."/>
            <person name="Fukushima T."/>
            <person name="Furuno M."/>
            <person name="Futaki S."/>
            <person name="Gariboldi M."/>
            <person name="Georgii-Hemming P."/>
            <person name="Gingeras T.R."/>
            <person name="Gojobori T."/>
            <person name="Green R.E."/>
            <person name="Gustincich S."/>
            <person name="Harbers M."/>
            <person name="Hayashi Y."/>
            <person name="Hensch T.K."/>
            <person name="Hirokawa N."/>
            <person name="Hill D."/>
            <person name="Huminiecki L."/>
            <person name="Iacono M."/>
            <person name="Ikeo K."/>
            <person name="Iwama A."/>
            <person name="Ishikawa T."/>
            <person name="Jakt M."/>
            <person name="Kanapin A."/>
            <person name="Katoh M."/>
            <person name="Kawasawa Y."/>
            <person name="Kelso J."/>
            <person name="Kitamura H."/>
            <person name="Kitano H."/>
            <person name="Kollias G."/>
            <person name="Krishnan S.P."/>
            <person name="Kruger A."/>
            <person name="Kummerfeld S.K."/>
            <person name="Kurochkin I.V."/>
            <person name="Lareau L.F."/>
            <person name="Lazarevic D."/>
            <person name="Lipovich L."/>
            <person name="Liu J."/>
            <person name="Liuni S."/>
            <person name="McWilliam S."/>
            <person name="Madan Babu M."/>
            <person name="Madera M."/>
            <person name="Marchionni L."/>
            <person name="Matsuda H."/>
            <person name="Matsuzawa S."/>
            <person name="Miki H."/>
            <person name="Mignone F."/>
            <person name="Miyake S."/>
            <person name="Morris K."/>
            <person name="Mottagui-Tabar S."/>
            <person name="Mulder N."/>
            <person name="Nakano N."/>
            <person name="Nakauchi H."/>
            <person name="Ng P."/>
            <person name="Nilsson R."/>
            <person name="Nishiguchi S."/>
            <person name="Nishikawa S."/>
            <person name="Nori F."/>
            <person name="Ohara O."/>
            <person name="Okazaki Y."/>
            <person name="Orlando V."/>
            <person name="Pang K.C."/>
            <person name="Pavan W.J."/>
            <person name="Pavesi G."/>
            <person name="Pesole G."/>
            <person name="Petrovsky N."/>
            <person name="Piazza S."/>
            <person name="Reed J."/>
            <person name="Reid J.F."/>
            <person name="Ring B.Z."/>
            <person name="Ringwald M."/>
            <person name="Rost B."/>
            <person name="Ruan Y."/>
            <person name="Salzberg S.L."/>
            <person name="Sandelin A."/>
            <person name="Schneider C."/>
            <person name="Schoenbach C."/>
            <person name="Sekiguchi K."/>
            <person name="Semple C.A."/>
            <person name="Seno S."/>
            <person name="Sessa L."/>
            <person name="Sheng Y."/>
            <person name="Shibata Y."/>
            <person name="Shimada H."/>
            <person name="Shimada K."/>
            <person name="Silva D."/>
            <person name="Sinclair B."/>
            <person name="Sperling S."/>
            <person name="Stupka E."/>
            <person name="Sugiura K."/>
            <person name="Sultana R."/>
            <person name="Takenaka Y."/>
            <person name="Taki K."/>
            <person name="Tammoja K."/>
            <person name="Tan S.L."/>
            <person name="Tang S."/>
            <person name="Taylor M.S."/>
            <person name="Tegner J."/>
            <person name="Teichmann S.A."/>
            <person name="Ueda H.R."/>
            <person name="van Nimwegen E."/>
            <person name="Verardo R."/>
            <person name="Wei C.L."/>
            <person name="Yagi K."/>
            <person name="Yamanishi H."/>
            <person name="Zabarovsky E."/>
            <person name="Zhu S."/>
            <person name="Zimmer A."/>
            <person name="Hide W."/>
            <person name="Bult C."/>
            <person name="Grimmond S.M."/>
            <person name="Teasdale R.D."/>
            <person name="Liu E.T."/>
            <person name="Brusic V."/>
            <person name="Quackenbush J."/>
            <person name="Wahlestedt C."/>
            <person name="Mattick J.S."/>
            <person name="Hume D.A."/>
            <person name="Kai C."/>
            <person name="Sasaki D."/>
            <person name="Tomaru Y."/>
            <person name="Fukuda S."/>
            <person name="Kanamori-Katayama M."/>
            <person name="Suzuki M."/>
            <person name="Aoki J."/>
            <person name="Arakawa T."/>
            <person name="Iida J."/>
            <person name="Imamura K."/>
            <person name="Itoh M."/>
            <person name="Kato T."/>
            <person name="Kawaji H."/>
            <person name="Kawagashira N."/>
            <person name="Kawashima T."/>
            <person name="Kojima M."/>
            <person name="Kondo S."/>
            <person name="Konno H."/>
            <person name="Nakano K."/>
            <person name="Ninomiya N."/>
            <person name="Nishio T."/>
            <person name="Okada M."/>
            <person name="Plessy C."/>
            <person name="Shibata K."/>
            <person name="Shiraki T."/>
            <person name="Suzuki S."/>
            <person name="Tagami M."/>
            <person name="Waki K."/>
            <person name="Watahiki A."/>
            <person name="Okamura-Oho Y."/>
            <person name="Suzuki H."/>
            <person name="Kawai J."/>
            <person name="Hayashizaki Y."/>
        </authorList>
    </citation>
    <scope>NUCLEOTIDE SEQUENCE [LARGE SCALE MRNA]</scope>
    <source>
        <strain>NOD</strain>
        <tissue>Spleen</tissue>
        <tissue>Thymus</tissue>
    </source>
</reference>
<reference key="3">
    <citation type="journal article" date="2009" name="PLoS Biol.">
        <title>Lineage-specific biology revealed by a finished genome assembly of the mouse.</title>
        <authorList>
            <person name="Church D.M."/>
            <person name="Goodstadt L."/>
            <person name="Hillier L.W."/>
            <person name="Zody M.C."/>
            <person name="Goldstein S."/>
            <person name="She X."/>
            <person name="Bult C.J."/>
            <person name="Agarwala R."/>
            <person name="Cherry J.L."/>
            <person name="DiCuccio M."/>
            <person name="Hlavina W."/>
            <person name="Kapustin Y."/>
            <person name="Meric P."/>
            <person name="Maglott D."/>
            <person name="Birtle Z."/>
            <person name="Marques A.C."/>
            <person name="Graves T."/>
            <person name="Zhou S."/>
            <person name="Teague B."/>
            <person name="Potamousis K."/>
            <person name="Churas C."/>
            <person name="Place M."/>
            <person name="Herschleb J."/>
            <person name="Runnheim R."/>
            <person name="Forrest D."/>
            <person name="Amos-Landgraf J."/>
            <person name="Schwartz D.C."/>
            <person name="Cheng Z."/>
            <person name="Lindblad-Toh K."/>
            <person name="Eichler E.E."/>
            <person name="Ponting C.P."/>
        </authorList>
    </citation>
    <scope>NUCLEOTIDE SEQUENCE [LARGE SCALE GENOMIC DNA]</scope>
    <source>
        <strain>C57BL/6J</strain>
    </source>
</reference>
<reference key="4">
    <citation type="submission" date="2005-09" db="EMBL/GenBank/DDBJ databases">
        <authorList>
            <person name="Mural R.J."/>
            <person name="Adams M.D."/>
            <person name="Myers E.W."/>
            <person name="Smith H.O."/>
            <person name="Venter J.C."/>
        </authorList>
    </citation>
    <scope>NUCLEOTIDE SEQUENCE [LARGE SCALE GENOMIC DNA]</scope>
</reference>
<reference key="5">
    <citation type="journal article" date="1995" name="J. Leukoc. Biol.">
        <title>Cloning and characterization of a novel cDNA that is IFN-gamma-induced in mouse peritoneal macrophages and encodes a putative GTP-binding protein.</title>
        <authorList>
            <person name="Lafuse W.P."/>
            <person name="Brown D."/>
            <person name="Castle L."/>
            <person name="Zwilling B.S."/>
        </authorList>
    </citation>
    <scope>INDUCTION BY IFNG</scope>
    <scope>TISSUE SPECIFICITY</scope>
</reference>
<reference key="6">
    <citation type="journal article" date="1998" name="J. Immunol.">
        <title>Specific antiviral activity demonstrated by TGTP, a member of a new family of interferon-induced GTPases.</title>
        <authorList>
            <person name="Carlow D.A."/>
            <person name="Teh S.J."/>
            <person name="Teh H.S."/>
        </authorList>
    </citation>
    <scope>FUNCTION</scope>
    <scope>INDUCTION BY IFNG</scope>
    <scope>CATALYTIC ACTIVITY</scope>
</reference>
<reference key="7">
    <citation type="journal article" date="2005" name="Genome Biol.">
        <title>The interferon-inducible p47 (IRG) GTPases in vertebrates: loss of the cell autonomous resistance mechanism in the human lineage.</title>
        <authorList>
            <person name="Bekpen C."/>
            <person name="Hunn J.P."/>
            <person name="Rohde C."/>
            <person name="Parvanova I."/>
            <person name="Guethlein L."/>
            <person name="Dunn D.M."/>
            <person name="Glowalla E."/>
            <person name="Leptin M."/>
            <person name="Howard J.C."/>
        </authorList>
    </citation>
    <scope>GENOMIC ORGANIZATION OF P47 GTPASE CLUSTER</scope>
</reference>
<reference key="8">
    <citation type="journal article" date="2009" name="Biochem. Biophys. Res. Commun.">
        <title>Upregulation of immunity-related GTPase (IRG) proteins by TNF-alpha in murine astrocytes.</title>
        <authorList>
            <person name="Yamada K."/>
            <person name="Akimoto H."/>
            <person name="Ogawa Y."/>
            <person name="Kinumi T."/>
            <person name="Kamagata Y."/>
            <person name="Ohmiya Y."/>
        </authorList>
    </citation>
    <scope>IDENTIFICATION BY MASS SPECTROMETRY</scope>
    <scope>SUBCELLULAR LOCATION</scope>
    <scope>INDUCTION BY TNF</scope>
    <scope>TISSUE SPECIFICITY</scope>
</reference>
<reference key="9">
    <citation type="journal article" date="2009" name="J. Immunol.">
        <title>Virulent Toxoplasma gondii evade immunity-related GTPase-mediated parasite vacuole disruption within primed macrophages.</title>
        <authorList>
            <person name="Zhao Y."/>
            <person name="Ferguson D.J."/>
            <person name="Wilson D.C."/>
            <person name="Howard J.C."/>
            <person name="Sibley L.D."/>
            <person name="Yap G.S."/>
        </authorList>
    </citation>
    <scope>FUNCTION</scope>
</reference>
<reference key="10">
    <citation type="journal article" date="2010" name="Cell Host Microbe">
        <title>Phosphorylation of immunity-related GTPases by a Toxoplasma gondii-secreted kinase promotes macrophage survival and virulence.</title>
        <authorList>
            <person name="Fentress S.J."/>
            <person name="Behnke M.S."/>
            <person name="Dunay I.R."/>
            <person name="Mashayekhi M."/>
            <person name="Rommereim L.M."/>
            <person name="Fox B.A."/>
            <person name="Bzik D.J."/>
            <person name="Taylor G.A."/>
            <person name="Turk B.E."/>
            <person name="Lichti C.F."/>
            <person name="Townsend R.R."/>
            <person name="Qiu W."/>
            <person name="Hui R."/>
            <person name="Beatty W.L."/>
            <person name="Sibley L.D."/>
        </authorList>
    </citation>
    <scope>FUNCTION</scope>
    <scope>INTERACTION WITH TOXOPLASMA ROP18 (MICROBIAL INFECTION)</scope>
    <scope>SUBCELLULAR LOCATION (MICROBIAL INFECTION)</scope>
    <scope>PHOSPHORYLATION AT THR-89 (MICROBIAL INFECTION)</scope>
</reference>
<reference key="11">
    <citation type="journal article" date="2010" name="Cell. Microbiol.">
        <title>Coordinated loading of IRG resistance GTPases on to the Toxoplasma gondii parasitophorous vacuole.</title>
        <authorList>
            <person name="Khaminets A."/>
            <person name="Hunn J.P."/>
            <person name="Koenen-Waisman S."/>
            <person name="Zhao Y.O."/>
            <person name="Preukschat D."/>
            <person name="Coers J."/>
            <person name="Boyle J.P."/>
            <person name="Ong Y.C."/>
            <person name="Boothroyd J.C."/>
            <person name="Reichmann G."/>
            <person name="Howard J.C."/>
        </authorList>
    </citation>
    <scope>FUNCTION</scope>
</reference>
<reference key="12">
    <citation type="journal article" date="2012" name="Funct. Integr. Genomics">
        <title>Comparative genomic analysis of eutherian interferon-gamma-inducible GTPases.</title>
        <authorList>
            <person name="Premzl M."/>
        </authorList>
    </citation>
    <scope>IDENTIFICATION</scope>
</reference>
<reference key="13">
    <citation type="journal article" date="2010" name="Cell">
        <title>A tissue-specific atlas of mouse protein phosphorylation and expression.</title>
        <authorList>
            <person name="Huttlin E.L."/>
            <person name="Jedrychowski M.P."/>
            <person name="Elias J.E."/>
            <person name="Goswami T."/>
            <person name="Rad R."/>
            <person name="Beausoleil S.A."/>
            <person name="Villen J."/>
            <person name="Haas W."/>
            <person name="Sowa M.E."/>
            <person name="Gygi S.P."/>
        </authorList>
    </citation>
    <scope>IDENTIFICATION BY MASS SPECTROMETRY [LARGE SCALE ANALYSIS]</scope>
    <source>
        <tissue>Liver</tissue>
        <tissue>Lung</tissue>
        <tissue>Spleen</tissue>
    </source>
</reference>
<reference key="14">
    <citation type="journal article" date="2012" name="PLoS Biol.">
        <title>A Toxoplasma gondii pseudokinase inhibits host IRG resistance proteins.</title>
        <authorList>
            <person name="Fleckenstein M.C."/>
            <person name="Reese M.L."/>
            <person name="Koenen-Waisman S."/>
            <person name="Boothroyd J.C."/>
            <person name="Howard J.C."/>
            <person name="Steinfeldt T."/>
        </authorList>
    </citation>
    <scope>FUNCTION</scope>
</reference>
<reference key="15">
    <citation type="journal article" date="2012" name="PLoS Pathog.">
        <title>The rhoptry proteins ROP18 and ROP5 mediate Toxoplasma gondii evasion of the murine, but not the human, interferon-gamma response.</title>
        <authorList>
            <person name="Niedelman W."/>
            <person name="Gold D.A."/>
            <person name="Rosowski E.E."/>
            <person name="Sprokholt J.K."/>
            <person name="Lim D."/>
            <person name="Farid Arenas A."/>
            <person name="Melo M.B."/>
            <person name="Spooner E."/>
            <person name="Yaffe M.B."/>
            <person name="Saeij J.P."/>
        </authorList>
    </citation>
    <scope>SUBCELLULAR LOCATION (MICROBIAL INFECTION)</scope>
</reference>
<reference key="16">
    <citation type="journal article" date="2013" name="ScientificWorldJournal">
        <title>In astrocytes the accumulation of the immunity-related GTPases Irga6 and Irgb6 at the vacuole of Toxoplasma gondii is dependent on the parasite virulence.</title>
        <authorList>
            <person name="Lubitz F.P."/>
            <person name="Degrandi D."/>
            <person name="Pfeffer K."/>
            <person name="Mausberg A.K."/>
        </authorList>
    </citation>
    <scope>FUNCTION</scope>
    <scope>SUBCELLULAR LOCATION (MICROBIAL INFECTION)</scope>
</reference>
<reference key="17">
    <citation type="journal article" date="2014" name="Cell Host Microbe">
        <title>The Toxoplasma pseudokinase ROP5 forms complexes with ROP18 and ROP17 kinases that synergize to control acute virulence in mice.</title>
        <authorList>
            <person name="Etheridge R.D."/>
            <person name="Alaganan A."/>
            <person name="Tang K."/>
            <person name="Lou H.J."/>
            <person name="Turk B.E."/>
            <person name="Sibley L.D."/>
        </authorList>
    </citation>
    <scope>IDENTIFICATION BY MASS SPECTROMETRY</scope>
    <scope>SUBUNIT</scope>
    <scope>PHOSPHORYLATION AT THR-89 (MICROBIAL INFECTION)</scope>
</reference>
<reference key="18">
    <citation type="journal article" date="2014" name="J. Immunol.">
        <title>Role of mouse and human autophagy proteins in IFN-gamma-induced cell-autonomous responses against Toxoplasma gondii.</title>
        <authorList>
            <person name="Ohshima J."/>
            <person name="Lee Y."/>
            <person name="Sasai M."/>
            <person name="Saitoh T."/>
            <person name="Su Ma J."/>
            <person name="Kamiyama N."/>
            <person name="Matsuura Y."/>
            <person name="Pann-Ghill S."/>
            <person name="Hayashi M."/>
            <person name="Ebisu S."/>
            <person name="Takeda K."/>
            <person name="Akira S."/>
            <person name="Yamamoto M."/>
        </authorList>
    </citation>
    <scope>FUNCTION</scope>
    <scope>INDUCTION BY IFNG</scope>
</reference>
<sequence length="415" mass="47121">MAWASSFDAFFKNFKRESKIISEYDITLIMTYIEENKLQKAVSVIEKVLRDIESAPLHIAVTGETGAGKSTFINTLRGVGHEEKGAAPTGAIETTMKRTPYPHPKLPNVTIWDLPGIGTTNFTPQNYLTEMKFGEYDFFIIISATRFKENDAQLAKAIAQMGMNFYFVRTKIDSDLDNEQKFKPKSFNKEEVLKNIKDYCSNHLQESLDSEPPVFLVSNVDISKYDFPKLETKLLQDLPAHKRHVFSLSLQSLTEATINYKRDSLKQKVFLEAMKAGALATIPLGGMISDILENLDETFNLYRSYFGLDDASLENIAQDLNMSVDDFKVHLRFPHLFAEHNDESLEDKLFKYIKHISSVTGGPVAAVTYYRMAYYLQNLFLDTAANDAIALLNSKALFEKKVGPYISEPPEYWEA</sequence>
<evidence type="ECO:0000250" key="1">
    <source>
        <dbReference type="UniProtKB" id="Q9QZ85"/>
    </source>
</evidence>
<evidence type="ECO:0000255" key="2">
    <source>
        <dbReference type="PROSITE-ProRule" id="PRU01053"/>
    </source>
</evidence>
<evidence type="ECO:0000269" key="3">
    <source>
    </source>
</evidence>
<evidence type="ECO:0000269" key="4">
    <source>
    </source>
</evidence>
<evidence type="ECO:0000269" key="5">
    <source>
    </source>
</evidence>
<evidence type="ECO:0000269" key="6">
    <source>
    </source>
</evidence>
<evidence type="ECO:0000269" key="7">
    <source>
    </source>
</evidence>
<evidence type="ECO:0000269" key="8">
    <source>
    </source>
</evidence>
<evidence type="ECO:0000269" key="9">
    <source>
    </source>
</evidence>
<evidence type="ECO:0000269" key="10">
    <source>
    </source>
</evidence>
<evidence type="ECO:0000269" key="11">
    <source>
    </source>
</evidence>
<evidence type="ECO:0000269" key="12">
    <source>
    </source>
</evidence>
<evidence type="ECO:0000269" key="13">
    <source>
    </source>
</evidence>
<evidence type="ECO:0000269" key="14">
    <source>
    </source>
</evidence>
<evidence type="ECO:0000303" key="15">
    <source>
    </source>
</evidence>
<evidence type="ECO:0000303" key="16">
    <source>
    </source>
</evidence>
<evidence type="ECO:0000303" key="17">
    <source>
    </source>
</evidence>
<evidence type="ECO:0000305" key="18"/>
<evidence type="ECO:0000305" key="19">
    <source>
    </source>
</evidence>
<evidence type="ECO:0000305" key="20">
    <source>
    </source>
</evidence>
<evidence type="ECO:0007829" key="21">
    <source>
        <dbReference type="PDB" id="7VEX"/>
    </source>
</evidence>
<evidence type="ECO:0007829" key="22">
    <source>
        <dbReference type="PDB" id="8H4M"/>
    </source>
</evidence>
<evidence type="ECO:0007829" key="23">
    <source>
        <dbReference type="PDB" id="8H4O"/>
    </source>
</evidence>
<feature type="chain" id="PRO_0000437943" description="T-cell-specific guanine nucleotide triphosphate-binding protein 2">
    <location>
        <begin position="1"/>
        <end position="415"/>
    </location>
</feature>
<feature type="domain" description="IRG-type G" evidence="2">
    <location>
        <begin position="55"/>
        <end position="237"/>
    </location>
</feature>
<feature type="binding site" evidence="1">
    <location>
        <position position="66"/>
    </location>
    <ligand>
        <name>GDP</name>
        <dbReference type="ChEBI" id="CHEBI:58189"/>
    </ligand>
</feature>
<feature type="binding site" evidence="1">
    <location>
        <position position="68"/>
    </location>
    <ligand>
        <name>GDP</name>
        <dbReference type="ChEBI" id="CHEBI:58189"/>
    </ligand>
</feature>
<feature type="binding site" evidence="1">
    <location>
        <position position="69"/>
    </location>
    <ligand>
        <name>GDP</name>
        <dbReference type="ChEBI" id="CHEBI:58189"/>
    </ligand>
</feature>
<feature type="binding site" evidence="1">
    <location>
        <position position="70"/>
    </location>
    <ligand>
        <name>GDP</name>
        <dbReference type="ChEBI" id="CHEBI:58189"/>
    </ligand>
</feature>
<feature type="binding site" evidence="1">
    <location>
        <position position="90"/>
    </location>
    <ligand>
        <name>GDP</name>
        <dbReference type="ChEBI" id="CHEBI:58189"/>
    </ligand>
</feature>
<feature type="binding site" evidence="1">
    <location>
        <position position="171"/>
    </location>
    <ligand>
        <name>GDP</name>
        <dbReference type="ChEBI" id="CHEBI:58189"/>
    </ligand>
</feature>
<feature type="binding site" evidence="1">
    <location>
        <position position="173"/>
    </location>
    <ligand>
        <name>GDP</name>
        <dbReference type="ChEBI" id="CHEBI:58189"/>
    </ligand>
</feature>
<feature type="binding site" evidence="1">
    <location>
        <position position="219"/>
    </location>
    <ligand>
        <name>GDP</name>
        <dbReference type="ChEBI" id="CHEBI:58189"/>
    </ligand>
</feature>
<feature type="modified residue" description="(Microbial infection) Phosphothreonine; by ROP17" evidence="6 11">
    <location>
        <position position="89"/>
    </location>
</feature>
<feature type="sequence conflict" description="In Ref. 2; BAE43078." evidence="18" ref="2">
    <original>E</original>
    <variation>G</variation>
    <location>
        <position position="399"/>
    </location>
</feature>
<feature type="helix" evidence="21">
    <location>
        <begin position="1"/>
        <end position="12"/>
    </location>
</feature>
<feature type="helix" evidence="21">
    <location>
        <begin position="16"/>
        <end position="18"/>
    </location>
</feature>
<feature type="helix" evidence="21">
    <location>
        <begin position="23"/>
        <end position="34"/>
    </location>
</feature>
<feature type="helix" evidence="21">
    <location>
        <begin position="38"/>
        <end position="54"/>
    </location>
</feature>
<feature type="strand" evidence="21">
    <location>
        <begin position="57"/>
        <end position="63"/>
    </location>
</feature>
<feature type="helix" evidence="23">
    <location>
        <begin position="65"/>
        <end position="67"/>
    </location>
</feature>
<feature type="helix" evidence="21">
    <location>
        <begin position="69"/>
        <end position="77"/>
    </location>
</feature>
<feature type="strand" evidence="22">
    <location>
        <begin position="81"/>
        <end position="83"/>
    </location>
</feature>
<feature type="strand" evidence="21">
    <location>
        <begin position="99"/>
        <end position="102"/>
    </location>
</feature>
<feature type="strand" evidence="21">
    <location>
        <begin position="109"/>
        <end position="115"/>
    </location>
</feature>
<feature type="helix" evidence="21">
    <location>
        <begin position="117"/>
        <end position="119"/>
    </location>
</feature>
<feature type="helix" evidence="21">
    <location>
        <begin position="124"/>
        <end position="130"/>
    </location>
</feature>
<feature type="helix" evidence="21">
    <location>
        <begin position="133"/>
        <end position="135"/>
    </location>
</feature>
<feature type="strand" evidence="21">
    <location>
        <begin position="137"/>
        <end position="145"/>
    </location>
</feature>
<feature type="helix" evidence="21">
    <location>
        <begin position="149"/>
        <end position="160"/>
    </location>
</feature>
<feature type="strand" evidence="21">
    <location>
        <begin position="165"/>
        <end position="169"/>
    </location>
</feature>
<feature type="helix" evidence="21">
    <location>
        <begin position="172"/>
        <end position="182"/>
    </location>
</feature>
<feature type="turn" evidence="21">
    <location>
        <begin position="184"/>
        <end position="186"/>
    </location>
</feature>
<feature type="helix" evidence="21">
    <location>
        <begin position="189"/>
        <end position="205"/>
    </location>
</feature>
<feature type="strand" evidence="21">
    <location>
        <begin position="208"/>
        <end position="210"/>
    </location>
</feature>
<feature type="strand" evidence="21">
    <location>
        <begin position="214"/>
        <end position="216"/>
    </location>
</feature>
<feature type="helix" evidence="21">
    <location>
        <begin position="227"/>
        <end position="237"/>
    </location>
</feature>
<feature type="helix" evidence="21">
    <location>
        <begin position="240"/>
        <end position="242"/>
    </location>
</feature>
<feature type="helix" evidence="21">
    <location>
        <begin position="243"/>
        <end position="249"/>
    </location>
</feature>
<feature type="strand" evidence="21">
    <location>
        <begin position="252"/>
        <end position="254"/>
    </location>
</feature>
<feature type="helix" evidence="21">
    <location>
        <begin position="255"/>
        <end position="276"/>
    </location>
</feature>
<feature type="strand" evidence="21">
    <location>
        <begin position="279"/>
        <end position="281"/>
    </location>
</feature>
<feature type="helix" evidence="21">
    <location>
        <begin position="288"/>
        <end position="294"/>
    </location>
</feature>
<feature type="helix" evidence="21">
    <location>
        <begin position="296"/>
        <end position="305"/>
    </location>
</feature>
<feature type="helix" evidence="21">
    <location>
        <begin position="310"/>
        <end position="319"/>
    </location>
</feature>
<feature type="helix" evidence="21">
    <location>
        <begin position="324"/>
        <end position="328"/>
    </location>
</feature>
<feature type="helix" evidence="21">
    <location>
        <begin position="333"/>
        <end position="335"/>
    </location>
</feature>
<feature type="helix" evidence="21">
    <location>
        <begin position="345"/>
        <end position="359"/>
    </location>
</feature>
<feature type="turn" evidence="21">
    <location>
        <begin position="360"/>
        <end position="364"/>
    </location>
</feature>
<feature type="helix" evidence="21">
    <location>
        <begin position="372"/>
        <end position="391"/>
    </location>
</feature>
<feature type="helix" evidence="21">
    <location>
        <begin position="394"/>
        <end position="399"/>
    </location>
</feature>
<feature type="turn" evidence="21">
    <location>
        <begin position="411"/>
        <end position="413"/>
    </location>
</feature>
<gene>
    <name type="primary">Tgtp2</name>
    <name evidence="15" type="synonym">Ifggb6</name>
    <name evidence="15" type="synonym">Irgb6</name>
    <name evidence="17" type="synonym">Mg21</name>
    <name evidence="16" type="synonym">Tgtp</name>
</gene>